<accession>O48958</accession>
<proteinExistence type="evidence at protein level"/>
<comment type="function">
    <text evidence="3">Cytochrome P450 involved in the biosynthesis of the cyanogenic glucoside dhurrin. Catalyzes the conversion of p-hydroxyphenylacetaldoxime to p-hydroxymandelonitrile via three different and successive activities: isomerization of the (E) isomer to the (Z) isomer of p-hydroxyphenylacetaldoxime, followed by dehydration of the oxime to the corresponding nitrile, and C-hydroxylation of the nitrile to produce p-hydroxymandelonitrile.</text>
</comment>
<comment type="catalytic activity">
    <reaction evidence="3">
        <text>(E)-4-hydroxyphenylacetaldehyde oxime + reduced [NADPH--hemoprotein reductase] + O2 = (S)-4-hydroxymandelonitrile + oxidized [NADPH--hemoprotein reductase] + 2 H2O + H(+)</text>
        <dbReference type="Rhea" id="RHEA:18401"/>
        <dbReference type="Rhea" id="RHEA-COMP:11964"/>
        <dbReference type="Rhea" id="RHEA-COMP:11965"/>
        <dbReference type="ChEBI" id="CHEBI:15377"/>
        <dbReference type="ChEBI" id="CHEBI:15378"/>
        <dbReference type="ChEBI" id="CHEBI:15379"/>
        <dbReference type="ChEBI" id="CHEBI:15666"/>
        <dbReference type="ChEBI" id="CHEBI:16660"/>
        <dbReference type="ChEBI" id="CHEBI:57618"/>
        <dbReference type="ChEBI" id="CHEBI:58210"/>
        <dbReference type="EC" id="1.14.14.37"/>
    </reaction>
    <physiologicalReaction direction="left-to-right" evidence="3">
        <dbReference type="Rhea" id="RHEA:18402"/>
    </physiologicalReaction>
</comment>
<comment type="catalytic activity">
    <reaction evidence="3">
        <text>(E)-4-hydroxyphenylacetaldehyde oxime = (Z)-(4-hydroxyphenyl)acetaldehyde oxime</text>
        <dbReference type="Rhea" id="RHEA:50724"/>
        <dbReference type="ChEBI" id="CHEBI:15666"/>
        <dbReference type="ChEBI" id="CHEBI:15667"/>
    </reaction>
    <physiologicalReaction direction="left-to-right" evidence="3">
        <dbReference type="Rhea" id="RHEA:50725"/>
    </physiologicalReaction>
</comment>
<comment type="catalytic activity">
    <reaction evidence="7">
        <text>(Z)-(4-hydroxyphenyl)acetaldehyde oxime = 4-hydroxyphenylacetonitrile + H2O</text>
        <dbReference type="Rhea" id="RHEA:50728"/>
        <dbReference type="ChEBI" id="CHEBI:15377"/>
        <dbReference type="ChEBI" id="CHEBI:15667"/>
        <dbReference type="ChEBI" id="CHEBI:16667"/>
    </reaction>
    <physiologicalReaction direction="left-to-right" evidence="7">
        <dbReference type="Rhea" id="RHEA:50729"/>
    </physiologicalReaction>
</comment>
<comment type="catalytic activity">
    <reaction evidence="7">
        <text>4-hydroxyphenylacetonitrile + reduced [NADPH--hemoprotein reductase] + O2 = (S)-4-hydroxymandelonitrile + oxidized [NADPH--hemoprotein reductase] + H2O + H(+)</text>
        <dbReference type="Rhea" id="RHEA:50732"/>
        <dbReference type="Rhea" id="RHEA-COMP:11964"/>
        <dbReference type="Rhea" id="RHEA-COMP:11965"/>
        <dbReference type="ChEBI" id="CHEBI:15377"/>
        <dbReference type="ChEBI" id="CHEBI:15378"/>
        <dbReference type="ChEBI" id="CHEBI:15379"/>
        <dbReference type="ChEBI" id="CHEBI:16660"/>
        <dbReference type="ChEBI" id="CHEBI:16667"/>
        <dbReference type="ChEBI" id="CHEBI:57618"/>
        <dbReference type="ChEBI" id="CHEBI:58210"/>
    </reaction>
    <physiologicalReaction direction="left-to-right" evidence="7">
        <dbReference type="Rhea" id="RHEA:50733"/>
    </physiologicalReaction>
</comment>
<comment type="cofactor">
    <cofactor evidence="1">
        <name>heme b</name>
        <dbReference type="ChEBI" id="CHEBI:60344"/>
    </cofactor>
</comment>
<comment type="pathway">
    <text evidence="3">Secondary metabolite biosynthesis; dhurrin biosynthesis; dhurrin from L-tyrosine: step 2/3.</text>
</comment>
<comment type="subcellular location">
    <subcellularLocation>
        <location evidence="6">Endoplasmic reticulum membrane</location>
        <topology evidence="6">Single-pass membrane protein</topology>
    </subcellularLocation>
</comment>
<comment type="similarity">
    <text evidence="6">Belongs to the cytochrome P450 family.</text>
</comment>
<organism>
    <name type="scientific">Sorghum bicolor</name>
    <name type="common">Sorghum</name>
    <name type="synonym">Sorghum vulgare</name>
    <dbReference type="NCBI Taxonomy" id="4558"/>
    <lineage>
        <taxon>Eukaryota</taxon>
        <taxon>Viridiplantae</taxon>
        <taxon>Streptophyta</taxon>
        <taxon>Embryophyta</taxon>
        <taxon>Tracheophyta</taxon>
        <taxon>Spermatophyta</taxon>
        <taxon>Magnoliopsida</taxon>
        <taxon>Liliopsida</taxon>
        <taxon>Poales</taxon>
        <taxon>Poaceae</taxon>
        <taxon>PACMAD clade</taxon>
        <taxon>Panicoideae</taxon>
        <taxon>Andropogonodae</taxon>
        <taxon>Andropogoneae</taxon>
        <taxon>Sorghinae</taxon>
        <taxon>Sorghum</taxon>
    </lineage>
</organism>
<reference key="1">
    <citation type="journal article" date="1998" name="Plant Mol. Biol.">
        <title>Cloning of three A-type cytochromes P450, CYP71E1, CYP98, and CYP99 from Sorghum bicolor (L.) Moench by a PCR approach and identification by expression in Escherichia coli of CYP71E1 as a multifunctional cytochrome P450 in the biosynthesis of the cyanogenic glucoside dhurrin.</title>
        <authorList>
            <person name="Bak S."/>
            <person name="Kahn R.A."/>
            <person name="Nielsen H.L."/>
            <person name="Moeller B.L."/>
            <person name="Halkier B.A."/>
        </authorList>
    </citation>
    <scope>NUCLEOTIDE SEQUENCE [MRNA]</scope>
    <source>
        <strain>cv. SS1000</strain>
        <tissue>Etiolated seedling</tissue>
    </source>
</reference>
<reference key="2">
    <citation type="journal article" date="2015" name="Plant J.">
        <title>The bifurcation of the cyanogenic glucoside and glucosinolate biosynthetic pathways.</title>
        <authorList>
            <person name="Clausen M."/>
            <person name="Kannangara R.M."/>
            <person name="Olsen C.E."/>
            <person name="Blomstedt C.K."/>
            <person name="Gleadow R.M."/>
            <person name="Joergensen K."/>
            <person name="Bak S."/>
            <person name="Motawie M.S."/>
            <person name="Moeller B.L."/>
        </authorList>
    </citation>
    <scope>FUNCTION</scope>
    <scope>CATALYTIC ACTIVITY</scope>
    <scope>PATHWAY</scope>
</reference>
<sequence length="531" mass="59088">MATTATPQLLGGSVPQQWQTCLLVLLPVLLVSYYLLTSRSRNRSRSGKLGGAPRLPPGPAQLPILGNLHLLGPLPHKNLRELARRYGPVMQLRLGTVPTVVVSSAEAAREVLKVHDVDCCSRPASPGPKRLSYDLKNVGFAPYGEYWREMRKLFALELLSMRRVKAACYAREQEMDRLVADLDRAAASKASIVLNDHVFALTDGIIGTVAFGNIYASKQFAHKERFQHVLDDAMDMMASFSAEDFFPNAAGRLADRLSGFLARRERIFNELDVFFEKVIDQHMDPARPVPDNGGDLVDVLINLCKEHDGTLRFTRDHVKAIVLDTFIGAIDTSSVTILWAMSELMRKPQVLRKAQAEVRAAVGDDKPRVNSEDAAKIPYLKMVVKETLRLHPPATLLVPRETMRDTTICGYDVPANTRVFVNAWAIGRDPASWPAPDEFNPDRFVGSDVDYYGSHFELIPFGAGRRICPGLTMGETNVTFTLANLLYCYDWALPGAMKPEDVSMEETGALTFHRKTPLVVVPTKYKNRRAA</sequence>
<gene>
    <name evidence="4 5" type="primary">CYP71E1</name>
</gene>
<keyword id="KW-0256">Endoplasmic reticulum</keyword>
<keyword id="KW-0349">Heme</keyword>
<keyword id="KW-0408">Iron</keyword>
<keyword id="KW-0472">Membrane</keyword>
<keyword id="KW-0479">Metal-binding</keyword>
<keyword id="KW-0503">Monooxygenase</keyword>
<keyword id="KW-0560">Oxidoreductase</keyword>
<keyword id="KW-0812">Transmembrane</keyword>
<keyword id="KW-1133">Transmembrane helix</keyword>
<name>C71E1_SORBI</name>
<dbReference type="EC" id="1.14.14.37" evidence="3"/>
<dbReference type="EMBL" id="AF029858">
    <property type="protein sequence ID" value="AAC39318.1"/>
    <property type="molecule type" value="mRNA"/>
</dbReference>
<dbReference type="PIR" id="T14640">
    <property type="entry name" value="T14640"/>
</dbReference>
<dbReference type="SMR" id="O48958"/>
<dbReference type="eggNOG" id="KOG0156">
    <property type="taxonomic scope" value="Eukaryota"/>
</dbReference>
<dbReference type="BioCyc" id="MetaCyc:MONOMER-522"/>
<dbReference type="BRENDA" id="1.14.14.37">
    <property type="organism ID" value="5768"/>
</dbReference>
<dbReference type="SABIO-RK" id="O48958"/>
<dbReference type="UniPathway" id="UPA00757">
    <property type="reaction ID" value="UER00745"/>
</dbReference>
<dbReference type="ExpressionAtlas" id="O48958">
    <property type="expression patterns" value="baseline and differential"/>
</dbReference>
<dbReference type="GO" id="GO:0005789">
    <property type="term" value="C:endoplasmic reticulum membrane"/>
    <property type="evidence" value="ECO:0007669"/>
    <property type="project" value="UniProtKB-SubCell"/>
</dbReference>
<dbReference type="GO" id="GO:0050592">
    <property type="term" value="F:4-hydroxyphenylacetaldehyde oxime monooxygenase activity"/>
    <property type="evidence" value="ECO:0007669"/>
    <property type="project" value="UniProtKB-EC"/>
</dbReference>
<dbReference type="GO" id="GO:0020037">
    <property type="term" value="F:heme binding"/>
    <property type="evidence" value="ECO:0007669"/>
    <property type="project" value="InterPro"/>
</dbReference>
<dbReference type="GO" id="GO:0047085">
    <property type="term" value="F:hydroxyphenylacetonitrile 2-monooxygenase activity"/>
    <property type="evidence" value="ECO:0007669"/>
    <property type="project" value="RHEA"/>
</dbReference>
<dbReference type="GO" id="GO:0005506">
    <property type="term" value="F:iron ion binding"/>
    <property type="evidence" value="ECO:0007669"/>
    <property type="project" value="InterPro"/>
</dbReference>
<dbReference type="GO" id="GO:0010132">
    <property type="term" value="P:dhurrin biosynthetic process"/>
    <property type="evidence" value="ECO:0007669"/>
    <property type="project" value="UniProtKB-UniPathway"/>
</dbReference>
<dbReference type="CDD" id="cd11072">
    <property type="entry name" value="CYP71-like"/>
    <property type="match status" value="1"/>
</dbReference>
<dbReference type="FunFam" id="1.10.630.10:FF:000043">
    <property type="entry name" value="Cytochrome P450 99A2"/>
    <property type="match status" value="1"/>
</dbReference>
<dbReference type="Gene3D" id="1.10.630.10">
    <property type="entry name" value="Cytochrome P450"/>
    <property type="match status" value="1"/>
</dbReference>
<dbReference type="InterPro" id="IPR001128">
    <property type="entry name" value="Cyt_P450"/>
</dbReference>
<dbReference type="InterPro" id="IPR017972">
    <property type="entry name" value="Cyt_P450_CS"/>
</dbReference>
<dbReference type="InterPro" id="IPR002401">
    <property type="entry name" value="Cyt_P450_E_grp-I"/>
</dbReference>
<dbReference type="InterPro" id="IPR036396">
    <property type="entry name" value="Cyt_P450_sf"/>
</dbReference>
<dbReference type="InterPro" id="IPR050193">
    <property type="entry name" value="Cytochrome_P450_71"/>
</dbReference>
<dbReference type="PANTHER" id="PTHR47956">
    <property type="entry name" value="CYTOCHROME P450 71B11-RELATED"/>
    <property type="match status" value="1"/>
</dbReference>
<dbReference type="PANTHER" id="PTHR47956:SF28">
    <property type="entry name" value="EUPATOLIDE SYNTHASE"/>
    <property type="match status" value="1"/>
</dbReference>
<dbReference type="Pfam" id="PF00067">
    <property type="entry name" value="p450"/>
    <property type="match status" value="1"/>
</dbReference>
<dbReference type="PRINTS" id="PR00463">
    <property type="entry name" value="EP450I"/>
</dbReference>
<dbReference type="PRINTS" id="PR00385">
    <property type="entry name" value="P450"/>
</dbReference>
<dbReference type="SUPFAM" id="SSF48264">
    <property type="entry name" value="Cytochrome P450"/>
    <property type="match status" value="1"/>
</dbReference>
<dbReference type="PROSITE" id="PS00086">
    <property type="entry name" value="CYTOCHROME_P450"/>
    <property type="match status" value="1"/>
</dbReference>
<evidence type="ECO:0000250" key="1">
    <source>
        <dbReference type="UniProtKB" id="P08686"/>
    </source>
</evidence>
<evidence type="ECO:0000255" key="2"/>
<evidence type="ECO:0000269" key="3">
    <source>
    </source>
</evidence>
<evidence type="ECO:0000303" key="4">
    <source>
    </source>
</evidence>
<evidence type="ECO:0000303" key="5">
    <source>
    </source>
</evidence>
<evidence type="ECO:0000305" key="6"/>
<evidence type="ECO:0000305" key="7">
    <source>
    </source>
</evidence>
<protein>
    <recommendedName>
        <fullName>4-hydroxyphenylacetaldehyde oxime monooxygenase</fullName>
        <ecNumber evidence="3">1.14.14.37</ecNumber>
    </recommendedName>
    <alternativeName>
        <fullName evidence="4 5">Cytochrome P450 71E1</fullName>
    </alternativeName>
</protein>
<feature type="chain" id="PRO_0000052123" description="4-hydroxyphenylacetaldehyde oxime monooxygenase">
    <location>
        <begin position="1"/>
        <end position="531"/>
    </location>
</feature>
<feature type="transmembrane region" description="Helical" evidence="2">
    <location>
        <begin position="18"/>
        <end position="38"/>
    </location>
</feature>
<feature type="binding site" evidence="1">
    <location>
        <position position="122"/>
    </location>
    <ligand>
        <name>heme b</name>
        <dbReference type="ChEBI" id="CHEBI:60344"/>
    </ligand>
</feature>
<feature type="binding site" evidence="1">
    <location>
        <position position="151"/>
    </location>
    <ligand>
        <name>heme b</name>
        <dbReference type="ChEBI" id="CHEBI:60344"/>
    </ligand>
</feature>
<feature type="binding site" evidence="1">
    <location>
        <position position="466"/>
    </location>
    <ligand>
        <name>heme b</name>
        <dbReference type="ChEBI" id="CHEBI:60344"/>
    </ligand>
</feature>
<feature type="binding site" description="axial binding residue" evidence="1">
    <location>
        <position position="468"/>
    </location>
    <ligand>
        <name>heme b</name>
        <dbReference type="ChEBI" id="CHEBI:60344"/>
    </ligand>
    <ligandPart>
        <name>Fe</name>
        <dbReference type="ChEBI" id="CHEBI:18248"/>
    </ligandPart>
</feature>